<protein>
    <recommendedName>
        <fullName evidence="1">Argininosuccinate synthase</fullName>
        <ecNumber evidence="1">6.3.4.5</ecNumber>
    </recommendedName>
    <alternativeName>
        <fullName evidence="1">Citrulline--aspartate ligase</fullName>
    </alternativeName>
</protein>
<sequence length="401" mass="44670">MEKKKVVLAYSGGLDTSVAIKWLQEKNYDIIALCLDLGEGKDLAFVKEKALSVGAIKSYMIDVQEEFANEYALMAMQAHTLYEGKYPLVSALSRPLIAKKLVEIAEQEGATAVAHGCTGKGNDQVRFEVSIQALNPYLEVIAPVREWKWSREEEIAYAKENNVPIPINLDSPFSIDQNLWGRSNECGILEDPWAAPPEDAYEMTLALEDTPNKPEFVEIGFEAGVPTTLNGTAYPLSELIKTLNALAGKHGVGRIDHVENRLVGIKSREVYECPAAMTLITAHKELEDLTLVKEVAHFKPMIEQKITELIYNGLWFSPLKQALNAFLQETQKNVTGTVRVKLFKGHAIVEGRKSEYSLYDEKLATYTAQDEFNHDAAVGFISLFGLPTKVYSQVNQKKVEA</sequence>
<evidence type="ECO:0000255" key="1">
    <source>
        <dbReference type="HAMAP-Rule" id="MF_00005"/>
    </source>
</evidence>
<evidence type="ECO:0000305" key="2"/>
<name>ASSY_BACAH</name>
<proteinExistence type="inferred from homology"/>
<reference key="1">
    <citation type="journal article" date="2007" name="J. Bacteriol.">
        <title>The complete genome sequence of Bacillus thuringiensis Al Hakam.</title>
        <authorList>
            <person name="Challacombe J.F."/>
            <person name="Altherr M.R."/>
            <person name="Xie G."/>
            <person name="Bhotika S.S."/>
            <person name="Brown N."/>
            <person name="Bruce D."/>
            <person name="Campbell C.S."/>
            <person name="Campbell M.L."/>
            <person name="Chen J."/>
            <person name="Chertkov O."/>
            <person name="Cleland C."/>
            <person name="Dimitrijevic M."/>
            <person name="Doggett N.A."/>
            <person name="Fawcett J.J."/>
            <person name="Glavina T."/>
            <person name="Goodwin L.A."/>
            <person name="Green L.D."/>
            <person name="Han C.S."/>
            <person name="Hill K.K."/>
            <person name="Hitchcock P."/>
            <person name="Jackson P.J."/>
            <person name="Keim P."/>
            <person name="Kewalramani A.R."/>
            <person name="Longmire J."/>
            <person name="Lucas S."/>
            <person name="Malfatti S."/>
            <person name="Martinez D."/>
            <person name="McMurry K."/>
            <person name="Meincke L.J."/>
            <person name="Misra M."/>
            <person name="Moseman B.L."/>
            <person name="Mundt M."/>
            <person name="Munk A.C."/>
            <person name="Okinaka R.T."/>
            <person name="Parson-Quintana B."/>
            <person name="Reilly L.P."/>
            <person name="Richardson P."/>
            <person name="Robinson D.L."/>
            <person name="Saunders E."/>
            <person name="Tapia R."/>
            <person name="Tesmer J.G."/>
            <person name="Thayer N."/>
            <person name="Thompson L.S."/>
            <person name="Tice H."/>
            <person name="Ticknor L.O."/>
            <person name="Wills P.L."/>
            <person name="Gilna P."/>
            <person name="Brettin T.S."/>
        </authorList>
    </citation>
    <scope>NUCLEOTIDE SEQUENCE [LARGE SCALE GENOMIC DNA]</scope>
    <source>
        <strain>Al Hakam</strain>
    </source>
</reference>
<comment type="catalytic activity">
    <reaction evidence="1">
        <text>L-citrulline + L-aspartate + ATP = 2-(N(omega)-L-arginino)succinate + AMP + diphosphate + H(+)</text>
        <dbReference type="Rhea" id="RHEA:10932"/>
        <dbReference type="ChEBI" id="CHEBI:15378"/>
        <dbReference type="ChEBI" id="CHEBI:29991"/>
        <dbReference type="ChEBI" id="CHEBI:30616"/>
        <dbReference type="ChEBI" id="CHEBI:33019"/>
        <dbReference type="ChEBI" id="CHEBI:57472"/>
        <dbReference type="ChEBI" id="CHEBI:57743"/>
        <dbReference type="ChEBI" id="CHEBI:456215"/>
        <dbReference type="EC" id="6.3.4.5"/>
    </reaction>
</comment>
<comment type="pathway">
    <text evidence="1">Amino-acid biosynthesis; L-arginine biosynthesis; L-arginine from L-ornithine and carbamoyl phosphate: step 2/3.</text>
</comment>
<comment type="subunit">
    <text evidence="1">Homotetramer.</text>
</comment>
<comment type="subcellular location">
    <subcellularLocation>
        <location evidence="1">Cytoplasm</location>
    </subcellularLocation>
</comment>
<comment type="similarity">
    <text evidence="1">Belongs to the argininosuccinate synthase family. Type 1 subfamily.</text>
</comment>
<comment type="sequence caution" evidence="2">
    <conflict type="erroneous initiation">
        <sequence resource="EMBL-CDS" id="ABK87417"/>
    </conflict>
</comment>
<gene>
    <name evidence="1" type="primary">argG</name>
    <name type="ordered locus">BALH_4210</name>
</gene>
<accession>A0RJM4</accession>
<feature type="chain" id="PRO_0000321302" description="Argininosuccinate synthase">
    <location>
        <begin position="1"/>
        <end position="401"/>
    </location>
</feature>
<feature type="binding site" evidence="1">
    <location>
        <begin position="9"/>
        <end position="17"/>
    </location>
    <ligand>
        <name>ATP</name>
        <dbReference type="ChEBI" id="CHEBI:30616"/>
    </ligand>
</feature>
<feature type="binding site" evidence="1">
    <location>
        <position position="86"/>
    </location>
    <ligand>
        <name>L-citrulline</name>
        <dbReference type="ChEBI" id="CHEBI:57743"/>
    </ligand>
</feature>
<feature type="binding site" evidence="1">
    <location>
        <position position="116"/>
    </location>
    <ligand>
        <name>ATP</name>
        <dbReference type="ChEBI" id="CHEBI:30616"/>
    </ligand>
</feature>
<feature type="binding site" evidence="1">
    <location>
        <position position="118"/>
    </location>
    <ligand>
        <name>L-aspartate</name>
        <dbReference type="ChEBI" id="CHEBI:29991"/>
    </ligand>
</feature>
<feature type="binding site" evidence="1">
    <location>
        <position position="122"/>
    </location>
    <ligand>
        <name>L-aspartate</name>
        <dbReference type="ChEBI" id="CHEBI:29991"/>
    </ligand>
</feature>
<feature type="binding site" evidence="1">
    <location>
        <position position="122"/>
    </location>
    <ligand>
        <name>L-citrulline</name>
        <dbReference type="ChEBI" id="CHEBI:57743"/>
    </ligand>
</feature>
<feature type="binding site" evidence="1">
    <location>
        <position position="123"/>
    </location>
    <ligand>
        <name>L-aspartate</name>
        <dbReference type="ChEBI" id="CHEBI:29991"/>
    </ligand>
</feature>
<feature type="binding site" evidence="1">
    <location>
        <position position="126"/>
    </location>
    <ligand>
        <name>L-citrulline</name>
        <dbReference type="ChEBI" id="CHEBI:57743"/>
    </ligand>
</feature>
<feature type="binding site" evidence="1">
    <location>
        <position position="174"/>
    </location>
    <ligand>
        <name>L-citrulline</name>
        <dbReference type="ChEBI" id="CHEBI:57743"/>
    </ligand>
</feature>
<feature type="binding site" evidence="1">
    <location>
        <position position="183"/>
    </location>
    <ligand>
        <name>L-citrulline</name>
        <dbReference type="ChEBI" id="CHEBI:57743"/>
    </ligand>
</feature>
<feature type="binding site" evidence="1">
    <location>
        <position position="259"/>
    </location>
    <ligand>
        <name>L-citrulline</name>
        <dbReference type="ChEBI" id="CHEBI:57743"/>
    </ligand>
</feature>
<feature type="binding site" evidence="1">
    <location>
        <position position="271"/>
    </location>
    <ligand>
        <name>L-citrulline</name>
        <dbReference type="ChEBI" id="CHEBI:57743"/>
    </ligand>
</feature>
<keyword id="KW-0028">Amino-acid biosynthesis</keyword>
<keyword id="KW-0055">Arginine biosynthesis</keyword>
<keyword id="KW-0067">ATP-binding</keyword>
<keyword id="KW-0963">Cytoplasm</keyword>
<keyword id="KW-0436">Ligase</keyword>
<keyword id="KW-0547">Nucleotide-binding</keyword>
<dbReference type="EC" id="6.3.4.5" evidence="1"/>
<dbReference type="EMBL" id="CP000485">
    <property type="protein sequence ID" value="ABK87417.1"/>
    <property type="status" value="ALT_INIT"/>
    <property type="molecule type" value="Genomic_DNA"/>
</dbReference>
<dbReference type="RefSeq" id="WP_000412329.1">
    <property type="nucleotide sequence ID" value="NC_008600.1"/>
</dbReference>
<dbReference type="SMR" id="A0RJM4"/>
<dbReference type="KEGG" id="btl:BALH_4210"/>
<dbReference type="HOGENOM" id="CLU_032784_4_2_9"/>
<dbReference type="UniPathway" id="UPA00068">
    <property type="reaction ID" value="UER00113"/>
</dbReference>
<dbReference type="GO" id="GO:0005737">
    <property type="term" value="C:cytoplasm"/>
    <property type="evidence" value="ECO:0007669"/>
    <property type="project" value="UniProtKB-SubCell"/>
</dbReference>
<dbReference type="GO" id="GO:0004055">
    <property type="term" value="F:argininosuccinate synthase activity"/>
    <property type="evidence" value="ECO:0007669"/>
    <property type="project" value="UniProtKB-UniRule"/>
</dbReference>
<dbReference type="GO" id="GO:0005524">
    <property type="term" value="F:ATP binding"/>
    <property type="evidence" value="ECO:0007669"/>
    <property type="project" value="UniProtKB-UniRule"/>
</dbReference>
<dbReference type="GO" id="GO:0000053">
    <property type="term" value="P:argininosuccinate metabolic process"/>
    <property type="evidence" value="ECO:0007669"/>
    <property type="project" value="TreeGrafter"/>
</dbReference>
<dbReference type="GO" id="GO:0006526">
    <property type="term" value="P:L-arginine biosynthetic process"/>
    <property type="evidence" value="ECO:0007669"/>
    <property type="project" value="UniProtKB-UniRule"/>
</dbReference>
<dbReference type="GO" id="GO:0000050">
    <property type="term" value="P:urea cycle"/>
    <property type="evidence" value="ECO:0007669"/>
    <property type="project" value="TreeGrafter"/>
</dbReference>
<dbReference type="CDD" id="cd01999">
    <property type="entry name" value="ASS"/>
    <property type="match status" value="1"/>
</dbReference>
<dbReference type="FunFam" id="1.20.5.470:FF:000002">
    <property type="entry name" value="Argininosuccinate synthase"/>
    <property type="match status" value="1"/>
</dbReference>
<dbReference type="FunFam" id="3.40.50.620:FF:000038">
    <property type="entry name" value="Argininosuccinate synthase"/>
    <property type="match status" value="1"/>
</dbReference>
<dbReference type="FunFam" id="3.90.1260.10:FF:000007">
    <property type="entry name" value="Argininosuccinate synthase"/>
    <property type="match status" value="1"/>
</dbReference>
<dbReference type="Gene3D" id="3.90.1260.10">
    <property type="entry name" value="Argininosuccinate synthetase, chain A, domain 2"/>
    <property type="match status" value="1"/>
</dbReference>
<dbReference type="Gene3D" id="3.40.50.620">
    <property type="entry name" value="HUPs"/>
    <property type="match status" value="1"/>
</dbReference>
<dbReference type="Gene3D" id="1.20.5.470">
    <property type="entry name" value="Single helix bin"/>
    <property type="match status" value="1"/>
</dbReference>
<dbReference type="HAMAP" id="MF_00005">
    <property type="entry name" value="Arg_succ_synth_type1"/>
    <property type="match status" value="1"/>
</dbReference>
<dbReference type="InterPro" id="IPR048268">
    <property type="entry name" value="Arginosuc_syn_C"/>
</dbReference>
<dbReference type="InterPro" id="IPR048267">
    <property type="entry name" value="Arginosuc_syn_N"/>
</dbReference>
<dbReference type="InterPro" id="IPR001518">
    <property type="entry name" value="Arginosuc_synth"/>
</dbReference>
<dbReference type="InterPro" id="IPR018223">
    <property type="entry name" value="Arginosuc_synth_CS"/>
</dbReference>
<dbReference type="InterPro" id="IPR023434">
    <property type="entry name" value="Arginosuc_synth_type_1_subfam"/>
</dbReference>
<dbReference type="InterPro" id="IPR024074">
    <property type="entry name" value="AS_cat/multimer_dom_body"/>
</dbReference>
<dbReference type="InterPro" id="IPR014729">
    <property type="entry name" value="Rossmann-like_a/b/a_fold"/>
</dbReference>
<dbReference type="NCBIfam" id="TIGR00032">
    <property type="entry name" value="argG"/>
    <property type="match status" value="1"/>
</dbReference>
<dbReference type="NCBIfam" id="NF001770">
    <property type="entry name" value="PRK00509.1"/>
    <property type="match status" value="1"/>
</dbReference>
<dbReference type="PANTHER" id="PTHR11587">
    <property type="entry name" value="ARGININOSUCCINATE SYNTHASE"/>
    <property type="match status" value="1"/>
</dbReference>
<dbReference type="PANTHER" id="PTHR11587:SF2">
    <property type="entry name" value="ARGININOSUCCINATE SYNTHASE"/>
    <property type="match status" value="1"/>
</dbReference>
<dbReference type="Pfam" id="PF20979">
    <property type="entry name" value="Arginosuc_syn_C"/>
    <property type="match status" value="1"/>
</dbReference>
<dbReference type="Pfam" id="PF00764">
    <property type="entry name" value="Arginosuc_synth"/>
    <property type="match status" value="1"/>
</dbReference>
<dbReference type="SUPFAM" id="SSF52402">
    <property type="entry name" value="Adenine nucleotide alpha hydrolases-like"/>
    <property type="match status" value="1"/>
</dbReference>
<dbReference type="SUPFAM" id="SSF69864">
    <property type="entry name" value="Argininosuccinate synthetase, C-terminal domain"/>
    <property type="match status" value="1"/>
</dbReference>
<dbReference type="PROSITE" id="PS00564">
    <property type="entry name" value="ARGININOSUCCIN_SYN_1"/>
    <property type="match status" value="1"/>
</dbReference>
<dbReference type="PROSITE" id="PS00565">
    <property type="entry name" value="ARGININOSUCCIN_SYN_2"/>
    <property type="match status" value="1"/>
</dbReference>
<organism>
    <name type="scientific">Bacillus thuringiensis (strain Al Hakam)</name>
    <dbReference type="NCBI Taxonomy" id="412694"/>
    <lineage>
        <taxon>Bacteria</taxon>
        <taxon>Bacillati</taxon>
        <taxon>Bacillota</taxon>
        <taxon>Bacilli</taxon>
        <taxon>Bacillales</taxon>
        <taxon>Bacillaceae</taxon>
        <taxon>Bacillus</taxon>
        <taxon>Bacillus cereus group</taxon>
    </lineage>
</organism>